<gene>
    <name evidence="1" type="primary">rsxC</name>
    <name type="ordered locus">E2348C_1716</name>
</gene>
<dbReference type="EC" id="7.-.-.-" evidence="1"/>
<dbReference type="EMBL" id="FM180568">
    <property type="protein sequence ID" value="CAS09264.1"/>
    <property type="molecule type" value="Genomic_DNA"/>
</dbReference>
<dbReference type="RefSeq" id="WP_000915831.1">
    <property type="nucleotide sequence ID" value="NC_011601.1"/>
</dbReference>
<dbReference type="SMR" id="B7URX0"/>
<dbReference type="KEGG" id="ecg:E2348C_1716"/>
<dbReference type="HOGENOM" id="CLU_010808_2_1_6"/>
<dbReference type="Proteomes" id="UP000008205">
    <property type="component" value="Chromosome"/>
</dbReference>
<dbReference type="GO" id="GO:0005886">
    <property type="term" value="C:plasma membrane"/>
    <property type="evidence" value="ECO:0007669"/>
    <property type="project" value="UniProtKB-SubCell"/>
</dbReference>
<dbReference type="GO" id="GO:0051539">
    <property type="term" value="F:4 iron, 4 sulfur cluster binding"/>
    <property type="evidence" value="ECO:0007669"/>
    <property type="project" value="UniProtKB-KW"/>
</dbReference>
<dbReference type="GO" id="GO:0009055">
    <property type="term" value="F:electron transfer activity"/>
    <property type="evidence" value="ECO:0007669"/>
    <property type="project" value="InterPro"/>
</dbReference>
<dbReference type="GO" id="GO:0046872">
    <property type="term" value="F:metal ion binding"/>
    <property type="evidence" value="ECO:0007669"/>
    <property type="project" value="UniProtKB-KW"/>
</dbReference>
<dbReference type="GO" id="GO:0022900">
    <property type="term" value="P:electron transport chain"/>
    <property type="evidence" value="ECO:0007669"/>
    <property type="project" value="UniProtKB-UniRule"/>
</dbReference>
<dbReference type="Gene3D" id="3.30.70.20">
    <property type="match status" value="1"/>
</dbReference>
<dbReference type="Gene3D" id="3.40.50.11540">
    <property type="entry name" value="NADH-ubiquinone oxidoreductase 51kDa subunit"/>
    <property type="match status" value="1"/>
</dbReference>
<dbReference type="HAMAP" id="MF_00461">
    <property type="entry name" value="RsxC_RnfC"/>
    <property type="match status" value="1"/>
</dbReference>
<dbReference type="InterPro" id="IPR017896">
    <property type="entry name" value="4Fe4S_Fe-S-bd"/>
</dbReference>
<dbReference type="InterPro" id="IPR017900">
    <property type="entry name" value="4Fe4S_Fe_S_CS"/>
</dbReference>
<dbReference type="InterPro" id="IPR010208">
    <property type="entry name" value="Ion_transpt_RnfC/RsxC"/>
</dbReference>
<dbReference type="InterPro" id="IPR011538">
    <property type="entry name" value="Nuo51_FMN-bd"/>
</dbReference>
<dbReference type="InterPro" id="IPR037225">
    <property type="entry name" value="Nuo51_FMN-bd_sf"/>
</dbReference>
<dbReference type="InterPro" id="IPR026902">
    <property type="entry name" value="RnfC_N"/>
</dbReference>
<dbReference type="InterPro" id="IPR019554">
    <property type="entry name" value="Soluble_ligand-bd"/>
</dbReference>
<dbReference type="NCBIfam" id="NF003454">
    <property type="entry name" value="PRK05035.1"/>
    <property type="match status" value="1"/>
</dbReference>
<dbReference type="NCBIfam" id="TIGR01945">
    <property type="entry name" value="rnfC"/>
    <property type="match status" value="1"/>
</dbReference>
<dbReference type="PANTHER" id="PTHR43034">
    <property type="entry name" value="ION-TRANSLOCATING OXIDOREDUCTASE COMPLEX SUBUNIT C"/>
    <property type="match status" value="1"/>
</dbReference>
<dbReference type="PANTHER" id="PTHR43034:SF2">
    <property type="entry name" value="ION-TRANSLOCATING OXIDOREDUCTASE COMPLEX SUBUNIT C"/>
    <property type="match status" value="1"/>
</dbReference>
<dbReference type="Pfam" id="PF01512">
    <property type="entry name" value="Complex1_51K"/>
    <property type="match status" value="1"/>
</dbReference>
<dbReference type="Pfam" id="PF12838">
    <property type="entry name" value="Fer4_7"/>
    <property type="match status" value="1"/>
</dbReference>
<dbReference type="Pfam" id="PF13375">
    <property type="entry name" value="RnfC_N"/>
    <property type="match status" value="1"/>
</dbReference>
<dbReference type="Pfam" id="PF10531">
    <property type="entry name" value="SLBB"/>
    <property type="match status" value="1"/>
</dbReference>
<dbReference type="SUPFAM" id="SSF46548">
    <property type="entry name" value="alpha-helical ferredoxin"/>
    <property type="match status" value="1"/>
</dbReference>
<dbReference type="SUPFAM" id="SSF142019">
    <property type="entry name" value="Nqo1 FMN-binding domain-like"/>
    <property type="match status" value="1"/>
</dbReference>
<dbReference type="PROSITE" id="PS00198">
    <property type="entry name" value="4FE4S_FER_1"/>
    <property type="match status" value="2"/>
</dbReference>
<dbReference type="PROSITE" id="PS51379">
    <property type="entry name" value="4FE4S_FER_2"/>
    <property type="match status" value="2"/>
</dbReference>
<comment type="function">
    <text evidence="1">Part of a membrane-bound complex that couples electron transfer with translocation of ions across the membrane. Required to maintain the reduced state of SoxR.</text>
</comment>
<comment type="cofactor">
    <cofactor evidence="1">
        <name>[4Fe-4S] cluster</name>
        <dbReference type="ChEBI" id="CHEBI:49883"/>
    </cofactor>
    <text evidence="1">Binds 2 [4Fe-4S] clusters per subunit.</text>
</comment>
<comment type="subunit">
    <text evidence="1">The complex is composed of six subunits: RsxA, RsxB, RsxC, RsxD, RsxE and RsxG.</text>
</comment>
<comment type="subcellular location">
    <subcellularLocation>
        <location evidence="1">Cell inner membrane</location>
        <topology evidence="1">Peripheral membrane protein</topology>
    </subcellularLocation>
</comment>
<comment type="similarity">
    <text evidence="1">Belongs to the 4Fe4S bacterial-type ferredoxin family. RnfC subfamily.</text>
</comment>
<proteinExistence type="inferred from homology"/>
<feature type="chain" id="PRO_1000194511" description="Ion-translocating oxidoreductase complex subunit C">
    <location>
        <begin position="1"/>
        <end position="741"/>
    </location>
</feature>
<feature type="domain" description="4Fe-4S ferredoxin-type 1" evidence="1">
    <location>
        <begin position="369"/>
        <end position="397"/>
    </location>
</feature>
<feature type="domain" description="4Fe-4S ferredoxin-type 2" evidence="1">
    <location>
        <begin position="407"/>
        <end position="436"/>
    </location>
</feature>
<feature type="region of interest" description="Disordered" evidence="2">
    <location>
        <begin position="627"/>
        <end position="654"/>
    </location>
</feature>
<feature type="binding site" evidence="1">
    <location>
        <position position="377"/>
    </location>
    <ligand>
        <name>[4Fe-4S] cluster</name>
        <dbReference type="ChEBI" id="CHEBI:49883"/>
        <label>1</label>
    </ligand>
</feature>
<feature type="binding site" evidence="1">
    <location>
        <position position="380"/>
    </location>
    <ligand>
        <name>[4Fe-4S] cluster</name>
        <dbReference type="ChEBI" id="CHEBI:49883"/>
        <label>1</label>
    </ligand>
</feature>
<feature type="binding site" evidence="1">
    <location>
        <position position="383"/>
    </location>
    <ligand>
        <name>[4Fe-4S] cluster</name>
        <dbReference type="ChEBI" id="CHEBI:49883"/>
        <label>1</label>
    </ligand>
</feature>
<feature type="binding site" evidence="1">
    <location>
        <position position="387"/>
    </location>
    <ligand>
        <name>[4Fe-4S] cluster</name>
        <dbReference type="ChEBI" id="CHEBI:49883"/>
        <label>2</label>
    </ligand>
</feature>
<feature type="binding site" evidence="1">
    <location>
        <position position="416"/>
    </location>
    <ligand>
        <name>[4Fe-4S] cluster</name>
        <dbReference type="ChEBI" id="CHEBI:49883"/>
        <label>2</label>
    </ligand>
</feature>
<feature type="binding site" evidence="1">
    <location>
        <position position="419"/>
    </location>
    <ligand>
        <name>[4Fe-4S] cluster</name>
        <dbReference type="ChEBI" id="CHEBI:49883"/>
        <label>2</label>
    </ligand>
</feature>
<feature type="binding site" evidence="1">
    <location>
        <position position="422"/>
    </location>
    <ligand>
        <name>[4Fe-4S] cluster</name>
        <dbReference type="ChEBI" id="CHEBI:49883"/>
        <label>2</label>
    </ligand>
</feature>
<feature type="binding site" evidence="1">
    <location>
        <position position="426"/>
    </location>
    <ligand>
        <name>[4Fe-4S] cluster</name>
        <dbReference type="ChEBI" id="CHEBI:49883"/>
        <label>1</label>
    </ligand>
</feature>
<keyword id="KW-0004">4Fe-4S</keyword>
<keyword id="KW-0997">Cell inner membrane</keyword>
<keyword id="KW-1003">Cell membrane</keyword>
<keyword id="KW-0249">Electron transport</keyword>
<keyword id="KW-0408">Iron</keyword>
<keyword id="KW-0411">Iron-sulfur</keyword>
<keyword id="KW-0472">Membrane</keyword>
<keyword id="KW-0479">Metal-binding</keyword>
<keyword id="KW-1185">Reference proteome</keyword>
<keyword id="KW-0677">Repeat</keyword>
<keyword id="KW-1278">Translocase</keyword>
<keyword id="KW-0813">Transport</keyword>
<organism>
    <name type="scientific">Escherichia coli O127:H6 (strain E2348/69 / EPEC)</name>
    <dbReference type="NCBI Taxonomy" id="574521"/>
    <lineage>
        <taxon>Bacteria</taxon>
        <taxon>Pseudomonadati</taxon>
        <taxon>Pseudomonadota</taxon>
        <taxon>Gammaproteobacteria</taxon>
        <taxon>Enterobacterales</taxon>
        <taxon>Enterobacteriaceae</taxon>
        <taxon>Escherichia</taxon>
    </lineage>
</organism>
<protein>
    <recommendedName>
        <fullName evidence="1">Ion-translocating oxidoreductase complex subunit C</fullName>
        <ecNumber evidence="1">7.-.-.-</ecNumber>
    </recommendedName>
    <alternativeName>
        <fullName evidence="1">Rsx electron transport complex subunit C</fullName>
    </alternativeName>
</protein>
<sequence length="741" mass="80414">MLKLFSAFRKNKIWDFNGGIHPPEMKTQSNGTPLRQVPLAQRFVIPLKQHIGAEGELCVSVGDKVLRGQPLTRGRGKMLPVHAPTSGTVTAIAPHSTSHPSALAELSVIIDADGEDCWIPRDGWADYRSRSREELIERIHQFGVAGLGGAGFPTGVKLQGGGDKIETLIINAAECEPYITADDRLMQDCAAQVVEGIRILAHILQPREILIGIEDNKPQAISMLRAVLADSHDISLRVIPTKYPSGGAKQLTYILTGKQVPHGGRSSDIGVLMQNVGTAYAVKRAVIDGEPITERVVTLTGEAIARPGNVWARLGTPVRHLLNDAGFCPSADQMVIMGGPLMGFTLPWLDVPVVKITNCLLAPSANELGEPQEEQSCIRCSACADACPADLLPQQLYWFSKGQQHDKATTHNIADCIECGACAWVCPSNIPLVQYFRQEKAEIAAIRQEEKRAAEAKARFEARQARLEREKAARLERHKSAAVQPAAKDKDAIAAALARVKEKQAQATQPIVIKAGERPDNSAIIAAREARKAQARAKQAELQQTNDAATVADPRKTAVEAAIARAKARKLEQQQANAEPEQQVDPRKAAVEAAIARAKARKLEQQQANAEPEEQIDPRKAAVEAAIARAKARKLEQQQQANAEPEEQVDPRKAAVEAAIARAKARKLEQQQANAEPEEQIDPRKAAVEAAIARAKARKLEQQQANAEPEEQIDPRKAAVAAAIARVQAKKAAQQKVVNED</sequence>
<reference key="1">
    <citation type="journal article" date="2009" name="J. Bacteriol.">
        <title>Complete genome sequence and comparative genome analysis of enteropathogenic Escherichia coli O127:H6 strain E2348/69.</title>
        <authorList>
            <person name="Iguchi A."/>
            <person name="Thomson N.R."/>
            <person name="Ogura Y."/>
            <person name="Saunders D."/>
            <person name="Ooka T."/>
            <person name="Henderson I.R."/>
            <person name="Harris D."/>
            <person name="Asadulghani M."/>
            <person name="Kurokawa K."/>
            <person name="Dean P."/>
            <person name="Kenny B."/>
            <person name="Quail M.A."/>
            <person name="Thurston S."/>
            <person name="Dougan G."/>
            <person name="Hayashi T."/>
            <person name="Parkhill J."/>
            <person name="Frankel G."/>
        </authorList>
    </citation>
    <scope>NUCLEOTIDE SEQUENCE [LARGE SCALE GENOMIC DNA]</scope>
    <source>
        <strain>E2348/69 / EPEC</strain>
    </source>
</reference>
<evidence type="ECO:0000255" key="1">
    <source>
        <dbReference type="HAMAP-Rule" id="MF_00461"/>
    </source>
</evidence>
<evidence type="ECO:0000256" key="2">
    <source>
        <dbReference type="SAM" id="MobiDB-lite"/>
    </source>
</evidence>
<accession>B7URX0</accession>
<name>RSXC_ECO27</name>